<keyword id="KW-0963">Cytoplasm</keyword>
<keyword id="KW-0274">FAD</keyword>
<keyword id="KW-0285">Flavoprotein</keyword>
<keyword id="KW-0489">Methyltransferase</keyword>
<keyword id="KW-0511">Multifunctional enzyme</keyword>
<keyword id="KW-0560">Oxidoreductase</keyword>
<keyword id="KW-0949">S-adenosyl-L-methionine</keyword>
<keyword id="KW-0808">Transferase</keyword>
<keyword id="KW-0819">tRNA processing</keyword>
<reference key="1">
    <citation type="journal article" date="2011" name="J. Bacteriol.">
        <title>Complete genome sequence of the plant growth-promoting endophyte Burkholderia phytofirmans strain PsJN.</title>
        <authorList>
            <person name="Weilharter A."/>
            <person name="Mitter B."/>
            <person name="Shin M.V."/>
            <person name="Chain P.S."/>
            <person name="Nowak J."/>
            <person name="Sessitsch A."/>
        </authorList>
    </citation>
    <scope>NUCLEOTIDE SEQUENCE [LARGE SCALE GENOMIC DNA]</scope>
    <source>
        <strain>DSM 17436 / LMG 22146 / PsJN</strain>
    </source>
</reference>
<gene>
    <name evidence="1" type="primary">mnmC</name>
    <name type="ordered locus">Bphyt_3932</name>
</gene>
<dbReference type="EC" id="2.1.1.61" evidence="1"/>
<dbReference type="EC" id="1.5.-.-" evidence="1"/>
<dbReference type="EMBL" id="CP001052">
    <property type="protein sequence ID" value="ACD18319.1"/>
    <property type="molecule type" value="Genomic_DNA"/>
</dbReference>
<dbReference type="RefSeq" id="WP_012434835.1">
    <property type="nucleotide sequence ID" value="NC_010681.1"/>
</dbReference>
<dbReference type="SMR" id="B2T7N8"/>
<dbReference type="STRING" id="398527.Bphyt_3932"/>
<dbReference type="KEGG" id="bpy:Bphyt_3932"/>
<dbReference type="eggNOG" id="COG0665">
    <property type="taxonomic scope" value="Bacteria"/>
</dbReference>
<dbReference type="eggNOG" id="COG4121">
    <property type="taxonomic scope" value="Bacteria"/>
</dbReference>
<dbReference type="HOGENOM" id="CLU_022427_1_0_4"/>
<dbReference type="OrthoDB" id="9786494at2"/>
<dbReference type="Proteomes" id="UP000001739">
    <property type="component" value="Chromosome 1"/>
</dbReference>
<dbReference type="GO" id="GO:0005737">
    <property type="term" value="C:cytoplasm"/>
    <property type="evidence" value="ECO:0007669"/>
    <property type="project" value="UniProtKB-SubCell"/>
</dbReference>
<dbReference type="GO" id="GO:0050660">
    <property type="term" value="F:flavin adenine dinucleotide binding"/>
    <property type="evidence" value="ECO:0007669"/>
    <property type="project" value="UniProtKB-UniRule"/>
</dbReference>
<dbReference type="GO" id="GO:0016645">
    <property type="term" value="F:oxidoreductase activity, acting on the CH-NH group of donors"/>
    <property type="evidence" value="ECO:0007669"/>
    <property type="project" value="InterPro"/>
</dbReference>
<dbReference type="GO" id="GO:0004808">
    <property type="term" value="F:tRNA (5-methylaminomethyl-2-thiouridylate)(34)-methyltransferase activity"/>
    <property type="evidence" value="ECO:0007669"/>
    <property type="project" value="UniProtKB-EC"/>
</dbReference>
<dbReference type="GO" id="GO:0032259">
    <property type="term" value="P:methylation"/>
    <property type="evidence" value="ECO:0007669"/>
    <property type="project" value="UniProtKB-KW"/>
</dbReference>
<dbReference type="GO" id="GO:0002097">
    <property type="term" value="P:tRNA wobble base modification"/>
    <property type="evidence" value="ECO:0007669"/>
    <property type="project" value="UniProtKB-UniRule"/>
</dbReference>
<dbReference type="Gene3D" id="3.30.9.10">
    <property type="entry name" value="D-Amino Acid Oxidase, subunit A, domain 2"/>
    <property type="match status" value="1"/>
</dbReference>
<dbReference type="Gene3D" id="3.50.50.60">
    <property type="entry name" value="FAD/NAD(P)-binding domain"/>
    <property type="match status" value="1"/>
</dbReference>
<dbReference type="Gene3D" id="3.40.50.150">
    <property type="entry name" value="Vaccinia Virus protein VP39"/>
    <property type="match status" value="1"/>
</dbReference>
<dbReference type="HAMAP" id="MF_01102">
    <property type="entry name" value="MnmC"/>
    <property type="match status" value="1"/>
</dbReference>
<dbReference type="InterPro" id="IPR006076">
    <property type="entry name" value="FAD-dep_OxRdtase"/>
</dbReference>
<dbReference type="InterPro" id="IPR036188">
    <property type="entry name" value="FAD/NAD-bd_sf"/>
</dbReference>
<dbReference type="InterPro" id="IPR008471">
    <property type="entry name" value="MnmC-like_methylTransf"/>
</dbReference>
<dbReference type="InterPro" id="IPR029063">
    <property type="entry name" value="SAM-dependent_MTases_sf"/>
</dbReference>
<dbReference type="InterPro" id="IPR023032">
    <property type="entry name" value="tRNA_MAMT_biosynth_bifunc_MnmC"/>
</dbReference>
<dbReference type="InterPro" id="IPR047785">
    <property type="entry name" value="tRNA_MNMC2"/>
</dbReference>
<dbReference type="InterPro" id="IPR017610">
    <property type="entry name" value="tRNA_S-uridine_synth_MnmC_C"/>
</dbReference>
<dbReference type="NCBIfam" id="TIGR03197">
    <property type="entry name" value="MnmC_Cterm"/>
    <property type="match status" value="1"/>
</dbReference>
<dbReference type="NCBIfam" id="NF002481">
    <property type="entry name" value="PRK01747.1-2"/>
    <property type="match status" value="1"/>
</dbReference>
<dbReference type="NCBIfam" id="NF002483">
    <property type="entry name" value="PRK01747.1-4"/>
    <property type="match status" value="1"/>
</dbReference>
<dbReference type="NCBIfam" id="NF033855">
    <property type="entry name" value="tRNA_MNMC2"/>
    <property type="match status" value="1"/>
</dbReference>
<dbReference type="PANTHER" id="PTHR13847">
    <property type="entry name" value="SARCOSINE DEHYDROGENASE-RELATED"/>
    <property type="match status" value="1"/>
</dbReference>
<dbReference type="PANTHER" id="PTHR13847:SF283">
    <property type="entry name" value="TRNA 5-METHYLAMINOMETHYL-2-THIOURIDINE BIOSYNTHESIS BIFUNCTIONAL PROTEIN MNMC"/>
    <property type="match status" value="1"/>
</dbReference>
<dbReference type="Pfam" id="PF01266">
    <property type="entry name" value="DAO"/>
    <property type="match status" value="1"/>
</dbReference>
<dbReference type="Pfam" id="PF05430">
    <property type="entry name" value="Methyltransf_30"/>
    <property type="match status" value="1"/>
</dbReference>
<dbReference type="SUPFAM" id="SSF54373">
    <property type="entry name" value="FAD-linked reductases, C-terminal domain"/>
    <property type="match status" value="1"/>
</dbReference>
<dbReference type="SUPFAM" id="SSF51905">
    <property type="entry name" value="FAD/NAD(P)-binding domain"/>
    <property type="match status" value="1"/>
</dbReference>
<name>MNMC_PARPJ</name>
<sequence>MTDPLIPAVLVFRDNGTPFSPLYDDIYHSAVGGLEQARYVFLRGNSLPDRWQGRRIFTVLETGFGMGINFLMTWAAWRADPLRCERLHFVSTEKHPFTVGDLRKAVAATISDPEIAALAQALANAWPTLVPGTHRLEFDEGRVVLTLVFGDAQERLPALRLRADAFYLDGFAPARNPELWTPMIFKALARLAGEGATFATCSSAGDIKRALIQCGFEYRKVDGFGWKRAMLVGHFAPRWRVRRHEPPAPLAVDERHAVVIGAGLAGCAVIERLAARGWRVTSLERHASVAQEASGNPAGVFHPMISRDDSIASRVTRAGFLYTLRRWAALERLGHAPLRGGQGLLQIAADENEARSISEAIAAFGYPGDYVTPVSAAEAQRLAGMPLARGGWFFPHGGWIDPASLCAAQCAAAGPLLERRFGVDVARIERSGGQWTVFDTSGEAIARAPVVIVASAHDAARIAGLQHAPTRSIRGQLTLLPPGAVLPPLQMPVIGEGYAVPLADGVTLTGATYELDDPDTSLRADGHLENLERVAQMLPAFANVADPARSTALTGRVAFRCVTSDRMPMIGQLADEAQAALDAQRLRGAWPLDLPRTDGLYGAFAYGSRGLVWAALGAELIASQLEGEPWPLERDLAEDIDPARFLLRALRQGAVS</sequence>
<evidence type="ECO:0000255" key="1">
    <source>
        <dbReference type="HAMAP-Rule" id="MF_01102"/>
    </source>
</evidence>
<proteinExistence type="inferred from homology"/>
<feature type="chain" id="PRO_0000347958" description="tRNA 5-methylaminomethyl-2-thiouridine biosynthesis bifunctional protein MnmC">
    <location>
        <begin position="1"/>
        <end position="656"/>
    </location>
</feature>
<feature type="region of interest" description="tRNA (mnm(5)s(2)U34)-methyltransferase">
    <location>
        <begin position="1"/>
        <end position="236"/>
    </location>
</feature>
<feature type="region of interest" description="FAD-dependent cmnm(5)s(2)U34 oxidoreductase">
    <location>
        <begin position="260"/>
        <end position="656"/>
    </location>
</feature>
<organism>
    <name type="scientific">Paraburkholderia phytofirmans (strain DSM 17436 / LMG 22146 / PsJN)</name>
    <name type="common">Burkholderia phytofirmans</name>
    <dbReference type="NCBI Taxonomy" id="398527"/>
    <lineage>
        <taxon>Bacteria</taxon>
        <taxon>Pseudomonadati</taxon>
        <taxon>Pseudomonadota</taxon>
        <taxon>Betaproteobacteria</taxon>
        <taxon>Burkholderiales</taxon>
        <taxon>Burkholderiaceae</taxon>
        <taxon>Paraburkholderia</taxon>
    </lineage>
</organism>
<comment type="function">
    <text evidence="1">Catalyzes the last two steps in the biosynthesis of 5-methylaminomethyl-2-thiouridine (mnm(5)s(2)U) at the wobble position (U34) in tRNA. Catalyzes the FAD-dependent demodification of cmnm(5)s(2)U34 to nm(5)s(2)U34, followed by the transfer of a methyl group from S-adenosyl-L-methionine to nm(5)s(2)U34, to form mnm(5)s(2)U34.</text>
</comment>
<comment type="catalytic activity">
    <reaction evidence="1">
        <text>5-aminomethyl-2-thiouridine(34) in tRNA + S-adenosyl-L-methionine = 5-methylaminomethyl-2-thiouridine(34) in tRNA + S-adenosyl-L-homocysteine + H(+)</text>
        <dbReference type="Rhea" id="RHEA:19569"/>
        <dbReference type="Rhea" id="RHEA-COMP:10195"/>
        <dbReference type="Rhea" id="RHEA-COMP:10197"/>
        <dbReference type="ChEBI" id="CHEBI:15378"/>
        <dbReference type="ChEBI" id="CHEBI:57856"/>
        <dbReference type="ChEBI" id="CHEBI:59789"/>
        <dbReference type="ChEBI" id="CHEBI:74454"/>
        <dbReference type="ChEBI" id="CHEBI:74455"/>
        <dbReference type="EC" id="2.1.1.61"/>
    </reaction>
</comment>
<comment type="cofactor">
    <cofactor evidence="1">
        <name>FAD</name>
        <dbReference type="ChEBI" id="CHEBI:57692"/>
    </cofactor>
</comment>
<comment type="subcellular location">
    <subcellularLocation>
        <location evidence="1">Cytoplasm</location>
    </subcellularLocation>
</comment>
<comment type="similarity">
    <text evidence="1">In the N-terminal section; belongs to the methyltransferase superfamily. tRNA (mnm(5)s(2)U34)-methyltransferase family.</text>
</comment>
<comment type="similarity">
    <text evidence="1">In the C-terminal section; belongs to the DAO family.</text>
</comment>
<accession>B2T7N8</accession>
<protein>
    <recommendedName>
        <fullName evidence="1">tRNA 5-methylaminomethyl-2-thiouridine biosynthesis bifunctional protein MnmC</fullName>
        <shortName evidence="1">tRNA mnm(5)s(2)U biosynthesis bifunctional protein</shortName>
    </recommendedName>
    <domain>
        <recommendedName>
            <fullName evidence="1">tRNA (mnm(5)s(2)U34)-methyltransferase</fullName>
            <ecNumber evidence="1">2.1.1.61</ecNumber>
        </recommendedName>
    </domain>
    <domain>
        <recommendedName>
            <fullName evidence="1">FAD-dependent cmnm(5)s(2)U34 oxidoreductase</fullName>
            <ecNumber evidence="1">1.5.-.-</ecNumber>
        </recommendedName>
    </domain>
</protein>